<feature type="signal peptide" evidence="1">
    <location>
        <begin position="1"/>
        <end position="21"/>
    </location>
</feature>
<feature type="chain" id="PRO_0000434498" description="Altered inheritance of mitochondria protein 6 homolog ARB_06966" evidence="1">
    <location>
        <begin position="22"/>
        <end position="314"/>
    </location>
</feature>
<feature type="glycosylation site" description="N-linked (GlcNAc...) asparagine" evidence="2">
    <location>
        <position position="91"/>
    </location>
</feature>
<feature type="glycosylation site" description="N-linked (GlcNAc...) asparagine" evidence="2">
    <location>
        <position position="184"/>
    </location>
</feature>
<sequence length="314" mass="34747">MKSSILASAAILAASLEPVAALSEPLQNILINTDRSPIYRYPTDVTRGIVPIPVHSHNDYWRDIPFYTALTTKLALSAGCISIEADVFLFNDTLYVGHEESALTKERTLQSLYIEPLMNVLKKTNPKSPFVSGPTRHGVFDTSSGQTLYLWIDVKNDGEKAWPHIVKALQPLRDANYLTKIQNNESFVPGPVTVIGTGGTPLSQVVSAADRDYFYDGPLKDLTGFTSLISPIASTSLMEVVGDIKSDSENPLNPTQLEAIRKQIKAAKEKSIGVRYWETPGWPIRLRNELWRTLWKEGVALLNADDVNAAKGYF</sequence>
<gene>
    <name type="ORF">ARB_06966</name>
</gene>
<evidence type="ECO:0000255" key="1"/>
<evidence type="ECO:0000255" key="2">
    <source>
        <dbReference type="PROSITE-ProRule" id="PRU00498"/>
    </source>
</evidence>
<evidence type="ECO:0000269" key="3">
    <source>
    </source>
</evidence>
<evidence type="ECO:0000305" key="4"/>
<evidence type="ECO:0000312" key="5">
    <source>
        <dbReference type="Proteomes" id="UP000008866"/>
    </source>
</evidence>
<comment type="subcellular location">
    <subcellularLocation>
        <location evidence="3">Secreted</location>
    </subcellularLocation>
</comment>
<comment type="similarity">
    <text evidence="4">Belongs to the AIM6 family.</text>
</comment>
<keyword id="KW-0325">Glycoprotein</keyword>
<keyword id="KW-1185">Reference proteome</keyword>
<keyword id="KW-0964">Secreted</keyword>
<keyword id="KW-0732">Signal</keyword>
<name>AIM6_ARTBC</name>
<reference key="1">
    <citation type="journal article" date="2011" name="Genome Biol.">
        <title>Comparative and functional genomics provide insights into the pathogenicity of dermatophytic fungi.</title>
        <authorList>
            <person name="Burmester A."/>
            <person name="Shelest E."/>
            <person name="Gloeckner G."/>
            <person name="Heddergott C."/>
            <person name="Schindler S."/>
            <person name="Staib P."/>
            <person name="Heidel A."/>
            <person name="Felder M."/>
            <person name="Petzold A."/>
            <person name="Szafranski K."/>
            <person name="Feuermann M."/>
            <person name="Pedruzzi I."/>
            <person name="Priebe S."/>
            <person name="Groth M."/>
            <person name="Winkler R."/>
            <person name="Li W."/>
            <person name="Kniemeyer O."/>
            <person name="Schroeckh V."/>
            <person name="Hertweck C."/>
            <person name="Hube B."/>
            <person name="White T.C."/>
            <person name="Platzer M."/>
            <person name="Guthke R."/>
            <person name="Heitman J."/>
            <person name="Woestemeyer J."/>
            <person name="Zipfel P.F."/>
            <person name="Monod M."/>
            <person name="Brakhage A.A."/>
        </authorList>
    </citation>
    <scope>NUCLEOTIDE SEQUENCE [LARGE SCALE GENOMIC DNA]</scope>
    <source>
        <strain evidence="5">ATCC MYA-4681 / CBS 112371</strain>
    </source>
</reference>
<reference key="2">
    <citation type="journal article" date="2011" name="Proteomics">
        <title>Identification of novel secreted proteases during extracellular proteolysis by dermatophytes at acidic pH.</title>
        <authorList>
            <person name="Sriranganadane D."/>
            <person name="Waridel P."/>
            <person name="Salamin K."/>
            <person name="Feuermann M."/>
            <person name="Mignon B."/>
            <person name="Staib P."/>
            <person name="Neuhaus J.M."/>
            <person name="Quadroni M."/>
            <person name="Monod M."/>
        </authorList>
    </citation>
    <scope>IDENTIFICATION BY MASS SPECTROMETRY</scope>
    <scope>SUBCELLULAR LOCATION</scope>
</reference>
<accession>D4ARV2</accession>
<organism>
    <name type="scientific">Arthroderma benhamiae (strain ATCC MYA-4681 / CBS 112371)</name>
    <name type="common">Trichophyton mentagrophytes</name>
    <dbReference type="NCBI Taxonomy" id="663331"/>
    <lineage>
        <taxon>Eukaryota</taxon>
        <taxon>Fungi</taxon>
        <taxon>Dikarya</taxon>
        <taxon>Ascomycota</taxon>
        <taxon>Pezizomycotina</taxon>
        <taxon>Eurotiomycetes</taxon>
        <taxon>Eurotiomycetidae</taxon>
        <taxon>Onygenales</taxon>
        <taxon>Arthrodermataceae</taxon>
        <taxon>Trichophyton</taxon>
    </lineage>
</organism>
<proteinExistence type="evidence at protein level"/>
<protein>
    <recommendedName>
        <fullName evidence="4">Altered inheritance of mitochondria protein 6 homolog ARB_06966</fullName>
    </recommendedName>
</protein>
<dbReference type="EMBL" id="ABSU01000007">
    <property type="protein sequence ID" value="EFE34016.1"/>
    <property type="molecule type" value="Genomic_DNA"/>
</dbReference>
<dbReference type="RefSeq" id="XP_003014405.1">
    <property type="nucleotide sequence ID" value="XM_003014359.1"/>
</dbReference>
<dbReference type="SMR" id="D4ARV2"/>
<dbReference type="GeneID" id="9520456"/>
<dbReference type="KEGG" id="abe:ARB_06966"/>
<dbReference type="eggNOG" id="ENOG502RXNI">
    <property type="taxonomic scope" value="Eukaryota"/>
</dbReference>
<dbReference type="HOGENOM" id="CLU_031561_1_0_1"/>
<dbReference type="OMA" id="HANYLTT"/>
<dbReference type="Proteomes" id="UP000008866">
    <property type="component" value="Unassembled WGS sequence"/>
</dbReference>
<dbReference type="GO" id="GO:0005576">
    <property type="term" value="C:extracellular region"/>
    <property type="evidence" value="ECO:0007669"/>
    <property type="project" value="UniProtKB-SubCell"/>
</dbReference>
<dbReference type="GO" id="GO:0008081">
    <property type="term" value="F:phosphoric diester hydrolase activity"/>
    <property type="evidence" value="ECO:0007669"/>
    <property type="project" value="InterPro"/>
</dbReference>
<dbReference type="GO" id="GO:0006629">
    <property type="term" value="P:lipid metabolic process"/>
    <property type="evidence" value="ECO:0007669"/>
    <property type="project" value="InterPro"/>
</dbReference>
<dbReference type="InterPro" id="IPR051236">
    <property type="entry name" value="HAT_RTT109-like"/>
</dbReference>
<dbReference type="InterPro" id="IPR017946">
    <property type="entry name" value="PLC-like_Pdiesterase_TIM-brl"/>
</dbReference>
<dbReference type="PANTHER" id="PTHR31571">
    <property type="entry name" value="ALTERED INHERITANCE OF MITOCHONDRIA PROTEIN 6"/>
    <property type="match status" value="1"/>
</dbReference>
<dbReference type="PANTHER" id="PTHR31571:SF5">
    <property type="entry name" value="ALTERED INHERITANCE OF MITOCHONDRIA PROTEIN 6"/>
    <property type="match status" value="1"/>
</dbReference>
<dbReference type="SUPFAM" id="SSF51695">
    <property type="entry name" value="PLC-like phosphodiesterases"/>
    <property type="match status" value="1"/>
</dbReference>